<proteinExistence type="inferred from homology"/>
<protein>
    <recommendedName>
        <fullName evidence="1">Small, acid-soluble spore protein H 1</fullName>
        <shortName evidence="1">SASP H 1</shortName>
    </recommendedName>
</protein>
<name>SSPH1_CLOBH</name>
<dbReference type="EMBL" id="CP000727">
    <property type="protein sequence ID" value="ABS37338.1"/>
    <property type="molecule type" value="Genomic_DNA"/>
</dbReference>
<dbReference type="EMBL" id="AM412317">
    <property type="protein sequence ID" value="CAL82343.1"/>
    <property type="molecule type" value="Genomic_DNA"/>
</dbReference>
<dbReference type="RefSeq" id="WP_011948497.1">
    <property type="nucleotide sequence ID" value="NC_009698.1"/>
</dbReference>
<dbReference type="RefSeq" id="YP_001253326.1">
    <property type="nucleotide sequence ID" value="NC_009495.1"/>
</dbReference>
<dbReference type="RefSeq" id="YP_001386721.1">
    <property type="nucleotide sequence ID" value="NC_009698.1"/>
</dbReference>
<dbReference type="GeneID" id="5185044"/>
<dbReference type="KEGG" id="cbh:CLC_0845"/>
<dbReference type="KEGG" id="cbo:CBO0789"/>
<dbReference type="PATRIC" id="fig|413999.7.peg.786"/>
<dbReference type="HOGENOM" id="CLU_2895957_0_0_9"/>
<dbReference type="PRO" id="PR:A5HZY2"/>
<dbReference type="Proteomes" id="UP000001986">
    <property type="component" value="Chromosome"/>
</dbReference>
<dbReference type="GO" id="GO:0042601">
    <property type="term" value="C:endospore-forming forespore"/>
    <property type="evidence" value="ECO:0007669"/>
    <property type="project" value="InterPro"/>
</dbReference>
<dbReference type="GO" id="GO:0030436">
    <property type="term" value="P:asexual sporulation"/>
    <property type="evidence" value="ECO:0007669"/>
    <property type="project" value="UniProtKB-UniRule"/>
</dbReference>
<dbReference type="GO" id="GO:0030435">
    <property type="term" value="P:sporulation resulting in formation of a cellular spore"/>
    <property type="evidence" value="ECO:0007669"/>
    <property type="project" value="UniProtKB-KW"/>
</dbReference>
<dbReference type="HAMAP" id="MF_00667">
    <property type="entry name" value="SspH"/>
    <property type="match status" value="1"/>
</dbReference>
<dbReference type="InterPro" id="IPR012610">
    <property type="entry name" value="SASP_SspH"/>
</dbReference>
<dbReference type="NCBIfam" id="TIGR02861">
    <property type="entry name" value="SASP_H"/>
    <property type="match status" value="1"/>
</dbReference>
<dbReference type="Pfam" id="PF08141">
    <property type="entry name" value="SspH"/>
    <property type="match status" value="1"/>
</dbReference>
<feature type="chain" id="PRO_0000329128" description="Small, acid-soluble spore protein H 1">
    <location>
        <begin position="1"/>
        <end position="62"/>
    </location>
</feature>
<gene>
    <name evidence="1" type="primary">sspH1</name>
    <name type="ordered locus">CBO0789</name>
    <name type="ordered locus">CLC_0845</name>
</gene>
<organism>
    <name type="scientific">Clostridium botulinum (strain Hall / ATCC 3502 / NCTC 13319 / Type A)</name>
    <dbReference type="NCBI Taxonomy" id="441771"/>
    <lineage>
        <taxon>Bacteria</taxon>
        <taxon>Bacillati</taxon>
        <taxon>Bacillota</taxon>
        <taxon>Clostridia</taxon>
        <taxon>Eubacteriales</taxon>
        <taxon>Clostridiaceae</taxon>
        <taxon>Clostridium</taxon>
    </lineage>
</organism>
<accession>A5HZY2</accession>
<accession>A7G1T2</accession>
<keyword id="KW-1185">Reference proteome</keyword>
<keyword id="KW-0749">Sporulation</keyword>
<sequence>MDASRASQLINSRETDVYCKSEPVIIRSVDEYSKMATVESLNNGTTIMAPLNDIRDSGVINH</sequence>
<comment type="subcellular location">
    <subcellularLocation>
        <location evidence="1">Spore core</location>
    </subcellularLocation>
</comment>
<comment type="similarity">
    <text evidence="1">Belongs to the SspH family.</text>
</comment>
<reference key="1">
    <citation type="journal article" date="2007" name="Genome Res.">
        <title>Genome sequence of a proteolytic (Group I) Clostridium botulinum strain Hall A and comparative analysis of the clostridial genomes.</title>
        <authorList>
            <person name="Sebaihia M."/>
            <person name="Peck M.W."/>
            <person name="Minton N.P."/>
            <person name="Thomson N.R."/>
            <person name="Holden M.T.G."/>
            <person name="Mitchell W.J."/>
            <person name="Carter A.T."/>
            <person name="Bentley S.D."/>
            <person name="Mason D.R."/>
            <person name="Crossman L."/>
            <person name="Paul C.J."/>
            <person name="Ivens A."/>
            <person name="Wells-Bennik M.H.J."/>
            <person name="Davis I.J."/>
            <person name="Cerdeno-Tarraga A.M."/>
            <person name="Churcher C."/>
            <person name="Quail M.A."/>
            <person name="Chillingworth T."/>
            <person name="Feltwell T."/>
            <person name="Fraser A."/>
            <person name="Goodhead I."/>
            <person name="Hance Z."/>
            <person name="Jagels K."/>
            <person name="Larke N."/>
            <person name="Maddison M."/>
            <person name="Moule S."/>
            <person name="Mungall K."/>
            <person name="Norbertczak H."/>
            <person name="Rabbinowitsch E."/>
            <person name="Sanders M."/>
            <person name="Simmonds M."/>
            <person name="White B."/>
            <person name="Whithead S."/>
            <person name="Parkhill J."/>
        </authorList>
    </citation>
    <scope>NUCLEOTIDE SEQUENCE [LARGE SCALE GENOMIC DNA]</scope>
    <source>
        <strain>Hall / ATCC 3502 / NCTC 13319 / Type A</strain>
    </source>
</reference>
<reference key="2">
    <citation type="journal article" date="2007" name="PLoS ONE">
        <title>Analysis of the neurotoxin complex genes in Clostridium botulinum A1-A4 and B1 strains: BoNT/A3, /Ba4 and /B1 clusters are located within plasmids.</title>
        <authorList>
            <person name="Smith T.J."/>
            <person name="Hill K.K."/>
            <person name="Foley B.T."/>
            <person name="Detter J.C."/>
            <person name="Munk A.C."/>
            <person name="Bruce D.C."/>
            <person name="Doggett N.A."/>
            <person name="Smith L.A."/>
            <person name="Marks J.D."/>
            <person name="Xie G."/>
            <person name="Brettin T.S."/>
        </authorList>
    </citation>
    <scope>NUCLEOTIDE SEQUENCE [LARGE SCALE GENOMIC DNA]</scope>
    <source>
        <strain>Hall / ATCC 3502 / NCTC 13319 / Type A</strain>
    </source>
</reference>
<evidence type="ECO:0000255" key="1">
    <source>
        <dbReference type="HAMAP-Rule" id="MF_00667"/>
    </source>
</evidence>